<reference key="1">
    <citation type="journal article" date="2002" name="Proc. Natl. Acad. Sci. U.S.A.">
        <title>Genome sequence and comparative microarray analysis of serotype M18 group A Streptococcus strains associated with acute rheumatic fever outbreaks.</title>
        <authorList>
            <person name="Smoot J.C."/>
            <person name="Barbian K.D."/>
            <person name="Van Gompel J.J."/>
            <person name="Smoot L.M."/>
            <person name="Chaussee M.S."/>
            <person name="Sylva G.L."/>
            <person name="Sturdevant D.E."/>
            <person name="Ricklefs S.M."/>
            <person name="Porcella S.F."/>
            <person name="Parkins L.D."/>
            <person name="Beres S.B."/>
            <person name="Campbell D.S."/>
            <person name="Smith T.M."/>
            <person name="Zhang Q."/>
            <person name="Kapur V."/>
            <person name="Daly J.A."/>
            <person name="Veasy L.G."/>
            <person name="Musser J.M."/>
        </authorList>
    </citation>
    <scope>NUCLEOTIDE SEQUENCE [LARGE SCALE GENOMIC DNA]</scope>
    <source>
        <strain>MGAS8232</strain>
    </source>
</reference>
<dbReference type="EC" id="6.3.5.7" evidence="1"/>
<dbReference type="EMBL" id="AE009949">
    <property type="protein sequence ID" value="AAL98358.1"/>
    <property type="molecule type" value="Genomic_DNA"/>
</dbReference>
<dbReference type="RefSeq" id="WP_011018163.1">
    <property type="nucleotide sequence ID" value="NC_003485.1"/>
</dbReference>
<dbReference type="SMR" id="Q8NZM0"/>
<dbReference type="KEGG" id="spm:spyM18_1840"/>
<dbReference type="HOGENOM" id="CLU_009600_0_3_9"/>
<dbReference type="GO" id="GO:0030956">
    <property type="term" value="C:glutamyl-tRNA(Gln) amidotransferase complex"/>
    <property type="evidence" value="ECO:0007669"/>
    <property type="project" value="InterPro"/>
</dbReference>
<dbReference type="GO" id="GO:0005524">
    <property type="term" value="F:ATP binding"/>
    <property type="evidence" value="ECO:0007669"/>
    <property type="project" value="UniProtKB-KW"/>
</dbReference>
<dbReference type="GO" id="GO:0050567">
    <property type="term" value="F:glutaminyl-tRNA synthase (glutamine-hydrolyzing) activity"/>
    <property type="evidence" value="ECO:0007669"/>
    <property type="project" value="UniProtKB-UniRule"/>
</dbReference>
<dbReference type="GO" id="GO:0006412">
    <property type="term" value="P:translation"/>
    <property type="evidence" value="ECO:0007669"/>
    <property type="project" value="UniProtKB-UniRule"/>
</dbReference>
<dbReference type="Gene3D" id="3.90.1300.10">
    <property type="entry name" value="Amidase signature (AS) domain"/>
    <property type="match status" value="1"/>
</dbReference>
<dbReference type="HAMAP" id="MF_00120">
    <property type="entry name" value="GatA"/>
    <property type="match status" value="1"/>
</dbReference>
<dbReference type="InterPro" id="IPR000120">
    <property type="entry name" value="Amidase"/>
</dbReference>
<dbReference type="InterPro" id="IPR020556">
    <property type="entry name" value="Amidase_CS"/>
</dbReference>
<dbReference type="InterPro" id="IPR023631">
    <property type="entry name" value="Amidase_dom"/>
</dbReference>
<dbReference type="InterPro" id="IPR036928">
    <property type="entry name" value="AS_sf"/>
</dbReference>
<dbReference type="InterPro" id="IPR004412">
    <property type="entry name" value="GatA"/>
</dbReference>
<dbReference type="NCBIfam" id="TIGR00132">
    <property type="entry name" value="gatA"/>
    <property type="match status" value="1"/>
</dbReference>
<dbReference type="PANTHER" id="PTHR11895:SF151">
    <property type="entry name" value="GLUTAMYL-TRNA(GLN) AMIDOTRANSFERASE SUBUNIT A"/>
    <property type="match status" value="1"/>
</dbReference>
<dbReference type="PANTHER" id="PTHR11895">
    <property type="entry name" value="TRANSAMIDASE"/>
    <property type="match status" value="1"/>
</dbReference>
<dbReference type="Pfam" id="PF01425">
    <property type="entry name" value="Amidase"/>
    <property type="match status" value="1"/>
</dbReference>
<dbReference type="SUPFAM" id="SSF75304">
    <property type="entry name" value="Amidase signature (AS) enzymes"/>
    <property type="match status" value="1"/>
</dbReference>
<dbReference type="PROSITE" id="PS00571">
    <property type="entry name" value="AMIDASES"/>
    <property type="match status" value="1"/>
</dbReference>
<feature type="chain" id="PRO_0000105216" description="Glutamyl-tRNA(Gln) amidotransferase subunit A">
    <location>
        <begin position="1"/>
        <end position="488"/>
    </location>
</feature>
<feature type="active site" description="Charge relay system" evidence="1">
    <location>
        <position position="77"/>
    </location>
</feature>
<feature type="active site" description="Charge relay system" evidence="1">
    <location>
        <position position="152"/>
    </location>
</feature>
<feature type="active site" description="Acyl-ester intermediate" evidence="1">
    <location>
        <position position="176"/>
    </location>
</feature>
<name>GATA_STRP8</name>
<accession>Q8NZM0</accession>
<organism>
    <name type="scientific">Streptococcus pyogenes serotype M18 (strain MGAS8232)</name>
    <dbReference type="NCBI Taxonomy" id="186103"/>
    <lineage>
        <taxon>Bacteria</taxon>
        <taxon>Bacillati</taxon>
        <taxon>Bacillota</taxon>
        <taxon>Bacilli</taxon>
        <taxon>Lactobacillales</taxon>
        <taxon>Streptococcaceae</taxon>
        <taxon>Streptococcus</taxon>
    </lineage>
</organism>
<keyword id="KW-0067">ATP-binding</keyword>
<keyword id="KW-0436">Ligase</keyword>
<keyword id="KW-0547">Nucleotide-binding</keyword>
<keyword id="KW-0648">Protein biosynthesis</keyword>
<comment type="function">
    <text evidence="1">Allows the formation of correctly charged Gln-tRNA(Gln) through the transamidation of misacylated Glu-tRNA(Gln) in organisms which lack glutaminyl-tRNA synthetase. The reaction takes place in the presence of glutamine and ATP through an activated gamma-phospho-Glu-tRNA(Gln).</text>
</comment>
<comment type="catalytic activity">
    <reaction evidence="1">
        <text>L-glutamyl-tRNA(Gln) + L-glutamine + ATP + H2O = L-glutaminyl-tRNA(Gln) + L-glutamate + ADP + phosphate + H(+)</text>
        <dbReference type="Rhea" id="RHEA:17521"/>
        <dbReference type="Rhea" id="RHEA-COMP:9681"/>
        <dbReference type="Rhea" id="RHEA-COMP:9684"/>
        <dbReference type="ChEBI" id="CHEBI:15377"/>
        <dbReference type="ChEBI" id="CHEBI:15378"/>
        <dbReference type="ChEBI" id="CHEBI:29985"/>
        <dbReference type="ChEBI" id="CHEBI:30616"/>
        <dbReference type="ChEBI" id="CHEBI:43474"/>
        <dbReference type="ChEBI" id="CHEBI:58359"/>
        <dbReference type="ChEBI" id="CHEBI:78520"/>
        <dbReference type="ChEBI" id="CHEBI:78521"/>
        <dbReference type="ChEBI" id="CHEBI:456216"/>
        <dbReference type="EC" id="6.3.5.7"/>
    </reaction>
</comment>
<comment type="subunit">
    <text evidence="1">Heterotrimer of A, B and C subunits.</text>
</comment>
<comment type="similarity">
    <text evidence="1">Belongs to the amidase family. GatA subfamily.</text>
</comment>
<protein>
    <recommendedName>
        <fullName evidence="1">Glutamyl-tRNA(Gln) amidotransferase subunit A</fullName>
        <shortName evidence="1">Glu-ADT subunit A</shortName>
        <ecNumber evidence="1">6.3.5.7</ecNumber>
    </recommendedName>
</protein>
<sequence length="488" mass="52204">MSFNHKTIEELHDLLVAKEISATELTQKTLEDIKSREEAVGSFITVSEEAALKQAAAIDAKGIDADNLMSGIPLAVKDNISTKGILTTAASKMLYNYEPIFDATSVANAYAKDMIVIGKTNMDEFAMGGSTETSYFKKTKNAWDHTKVPGGSSGGSATAVASGQVRLSLGSDTGGSIRQPAAFNGVVGLKPTYGTVSRYGLIAFGSSLDQIGPFAPTVKENAQLLNVIASSDVKDATSAPVRIADYTSKIGRDIKGMKIALPKEYLGEGIDPEIKETVLAAAKQFEALGATVEEVSLPHSKYGVAVYYIIASSEASSNLQRFDGIRYGFRADDAKNLDEIYVNTRSQGFGDEVKRRIMLGTFSLSSGYYDAYFKKAGQVRTLIIQDFDKVFADYDLILGPTTPTVAFGLDTLNHDPVAMYLADLLTIPVNLAGLPGISIPAGFVDGLPVGLQLIGPKYAEETIYQAAAAFEAVTDYHKQQPIIFGGDK</sequence>
<proteinExistence type="inferred from homology"/>
<gene>
    <name evidence="1" type="primary">gatA</name>
    <name type="ordered locus">spyM18_1840</name>
</gene>
<evidence type="ECO:0000255" key="1">
    <source>
        <dbReference type="HAMAP-Rule" id="MF_00120"/>
    </source>
</evidence>